<accession>O48626</accession>
<accession>O48775</accession>
<accession>Q8GY19</accession>
<gene>
    <name type="primary">ZW10</name>
    <name evidence="3" type="synonym">MIP1</name>
    <name evidence="5" type="ordered locus">At2g32900</name>
    <name evidence="6" type="ORF">T21L14.16</name>
</gene>
<protein>
    <recommendedName>
        <fullName>Centromere/kinetochore protein zw10 homolog</fullName>
        <shortName>AtZW10</shortName>
    </recommendedName>
    <alternativeName>
        <fullName evidence="3">MAG2-interacting protein 1</fullName>
    </alternativeName>
</protein>
<organism>
    <name type="scientific">Arabidopsis thaliana</name>
    <name type="common">Mouse-ear cress</name>
    <dbReference type="NCBI Taxonomy" id="3702"/>
    <lineage>
        <taxon>Eukaryota</taxon>
        <taxon>Viridiplantae</taxon>
        <taxon>Streptophyta</taxon>
        <taxon>Embryophyta</taxon>
        <taxon>Tracheophyta</taxon>
        <taxon>Spermatophyta</taxon>
        <taxon>Magnoliopsida</taxon>
        <taxon>eudicotyledons</taxon>
        <taxon>Gunneridae</taxon>
        <taxon>Pentapetalae</taxon>
        <taxon>rosids</taxon>
        <taxon>malvids</taxon>
        <taxon>Brassicales</taxon>
        <taxon>Brassicaceae</taxon>
        <taxon>Camelineae</taxon>
        <taxon>Arabidopsis</taxon>
    </lineage>
</organism>
<name>ZW10_ARATH</name>
<comment type="function">
    <text evidence="2 4">May be required for accurate chromosome segregation. Required for proper maturation of seed storage proteins. Forms a complex with MAG2, MIP2 and MIP3 on the endoplasmic reticulum that may be responsible for efficient transport of seed storage proteins.</text>
</comment>
<comment type="subunit">
    <text evidence="1 2">Interacts (via the central region) with MAG2 (PubMed:23025793). Forms a complex with MAG2, MIP2 and MIP3 on the endoplasmic reticulum (PubMed:24118572).</text>
</comment>
<comment type="subcellular location">
    <subcellularLocation>
        <location>Cytoplasm</location>
        <location>Cytoskeleton</location>
        <location>Spindle</location>
    </subcellularLocation>
    <subcellularLocation>
        <location>Cytoplasm</location>
    </subcellularLocation>
    <subcellularLocation>
        <location>Chromosome</location>
        <location>Centromere</location>
    </subcellularLocation>
    <subcellularLocation>
        <location>Chromosome</location>
        <location>Centromere</location>
        <location>Kinetochore</location>
    </subcellularLocation>
    <subcellularLocation>
        <location>Endoplasmic reticulum membrane</location>
        <topology evidence="2">Peripheral membrane protein</topology>
    </subcellularLocation>
    <text>In prometaphase, associated with the kinetochore. At metaphase, mostly associated with the spindle. In early anaphase, found in the vicinity of the centromere. As anaphase progresses, dispersed in the cytoplasm.</text>
</comment>
<comment type="disruption phenotype">
    <text evidence="2">Accumulation of the precursors of the two major storage proteins albumin 2S and globulin 12S in dry seeds.</text>
</comment>
<comment type="similarity">
    <text evidence="4">Belongs to the ZW10 family.</text>
</comment>
<comment type="sequence caution" evidence="4">
    <conflict type="erroneous gene model prediction">
        <sequence resource="EMBL-CDS" id="AAB91977"/>
    </conflict>
</comment>
<feature type="chain" id="PRO_0000184963" description="Centromere/kinetochore protein zw10 homolog">
    <location>
        <begin position="1"/>
        <end position="742"/>
    </location>
</feature>
<feature type="sequence conflict" description="In Ref. 4; BAC42555." ref="4">
    <original>E</original>
    <variation>G</variation>
    <location>
        <position position="702"/>
    </location>
</feature>
<proteinExistence type="evidence at protein level"/>
<dbReference type="EMBL" id="U80984">
    <property type="protein sequence ID" value="AAB88246.1"/>
    <property type="molecule type" value="mRNA"/>
</dbReference>
<dbReference type="EMBL" id="AC003033">
    <property type="protein sequence ID" value="AAB91977.2"/>
    <property type="status" value="ALT_SEQ"/>
    <property type="molecule type" value="Genomic_DNA"/>
</dbReference>
<dbReference type="EMBL" id="CP002685">
    <property type="protein sequence ID" value="AEC08759.1"/>
    <property type="molecule type" value="Genomic_DNA"/>
</dbReference>
<dbReference type="EMBL" id="AK117917">
    <property type="protein sequence ID" value="BAC42555.1"/>
    <property type="molecule type" value="mRNA"/>
</dbReference>
<dbReference type="EMBL" id="AY069883">
    <property type="protein sequence ID" value="AAL47437.1"/>
    <property type="molecule type" value="mRNA"/>
</dbReference>
<dbReference type="PIR" id="T01117">
    <property type="entry name" value="T01117"/>
</dbReference>
<dbReference type="RefSeq" id="NP_565757.2">
    <property type="nucleotide sequence ID" value="NM_128850.3"/>
</dbReference>
<dbReference type="SMR" id="O48626"/>
<dbReference type="BioGRID" id="3198">
    <property type="interactions" value="3"/>
</dbReference>
<dbReference type="FunCoup" id="O48626">
    <property type="interactions" value="4169"/>
</dbReference>
<dbReference type="STRING" id="3702.O48626"/>
<dbReference type="PaxDb" id="3702-AT2G32900.1"/>
<dbReference type="ProteomicsDB" id="232302"/>
<dbReference type="EnsemblPlants" id="AT2G32900.1">
    <property type="protein sequence ID" value="AT2G32900.1"/>
    <property type="gene ID" value="AT2G32900"/>
</dbReference>
<dbReference type="GeneID" id="817851"/>
<dbReference type="Gramene" id="AT2G32900.1">
    <property type="protein sequence ID" value="AT2G32900.1"/>
    <property type="gene ID" value="AT2G32900"/>
</dbReference>
<dbReference type="KEGG" id="ath:AT2G32900"/>
<dbReference type="Araport" id="AT2G32900"/>
<dbReference type="TAIR" id="AT2G32900">
    <property type="gene designation" value="ATZW10"/>
</dbReference>
<dbReference type="eggNOG" id="KOG2163">
    <property type="taxonomic scope" value="Eukaryota"/>
</dbReference>
<dbReference type="HOGENOM" id="CLU_012948_1_0_1"/>
<dbReference type="InParanoid" id="O48626"/>
<dbReference type="OMA" id="HHLLTMG"/>
<dbReference type="PhylomeDB" id="O48626"/>
<dbReference type="PRO" id="PR:O48626"/>
<dbReference type="Proteomes" id="UP000006548">
    <property type="component" value="Chromosome 2"/>
</dbReference>
<dbReference type="ExpressionAtlas" id="O48626">
    <property type="expression patterns" value="baseline and differential"/>
</dbReference>
<dbReference type="GO" id="GO:0005789">
    <property type="term" value="C:endoplasmic reticulum membrane"/>
    <property type="evidence" value="ECO:0007669"/>
    <property type="project" value="UniProtKB-SubCell"/>
</dbReference>
<dbReference type="GO" id="GO:0000776">
    <property type="term" value="C:kinetochore"/>
    <property type="evidence" value="ECO:0007669"/>
    <property type="project" value="UniProtKB-KW"/>
</dbReference>
<dbReference type="GO" id="GO:0005634">
    <property type="term" value="C:nucleus"/>
    <property type="evidence" value="ECO:0007669"/>
    <property type="project" value="InterPro"/>
</dbReference>
<dbReference type="GO" id="GO:0005819">
    <property type="term" value="C:spindle"/>
    <property type="evidence" value="ECO:0007669"/>
    <property type="project" value="UniProtKB-SubCell"/>
</dbReference>
<dbReference type="GO" id="GO:0051301">
    <property type="term" value="P:cell division"/>
    <property type="evidence" value="ECO:0007669"/>
    <property type="project" value="UniProtKB-KW"/>
</dbReference>
<dbReference type="GO" id="GO:0007059">
    <property type="term" value="P:chromosome segregation"/>
    <property type="evidence" value="ECO:0000250"/>
    <property type="project" value="TAIR"/>
</dbReference>
<dbReference type="GO" id="GO:0000278">
    <property type="term" value="P:mitotic cell cycle"/>
    <property type="evidence" value="ECO:0007669"/>
    <property type="project" value="InterPro"/>
</dbReference>
<dbReference type="GO" id="GO:0032527">
    <property type="term" value="P:protein exit from endoplasmic reticulum"/>
    <property type="evidence" value="ECO:0000315"/>
    <property type="project" value="TAIR"/>
</dbReference>
<dbReference type="GO" id="GO:0015031">
    <property type="term" value="P:protein transport"/>
    <property type="evidence" value="ECO:0000315"/>
    <property type="project" value="TAIR"/>
</dbReference>
<dbReference type="Gene3D" id="1.10.357.150">
    <property type="match status" value="1"/>
</dbReference>
<dbReference type="InterPro" id="IPR046362">
    <property type="entry name" value="Zw10/DSL1_C_sf"/>
</dbReference>
<dbReference type="InterPro" id="IPR048343">
    <property type="entry name" value="ZW10_C"/>
</dbReference>
<dbReference type="InterPro" id="IPR055148">
    <property type="entry name" value="ZW10_C_2"/>
</dbReference>
<dbReference type="InterPro" id="IPR048344">
    <property type="entry name" value="Zw10_middle"/>
</dbReference>
<dbReference type="InterPro" id="IPR009361">
    <property type="entry name" value="Zw10_N"/>
</dbReference>
<dbReference type="PANTHER" id="PTHR12205">
    <property type="entry name" value="CENTROMERE/KINETOCHORE PROTEIN ZW10"/>
    <property type="match status" value="1"/>
</dbReference>
<dbReference type="PANTHER" id="PTHR12205:SF0">
    <property type="entry name" value="CENTROMERE_KINETOCHORE PROTEIN ZW10 HOMOLOG"/>
    <property type="match status" value="1"/>
</dbReference>
<dbReference type="Pfam" id="PF20666">
    <property type="entry name" value="ZW10_C"/>
    <property type="match status" value="1"/>
</dbReference>
<dbReference type="Pfam" id="PF22766">
    <property type="entry name" value="ZW10_C2"/>
    <property type="match status" value="1"/>
</dbReference>
<dbReference type="Pfam" id="PF20665">
    <property type="entry name" value="Zw10_middle"/>
    <property type="match status" value="1"/>
</dbReference>
<dbReference type="Pfam" id="PF06248">
    <property type="entry name" value="Zw10_N"/>
    <property type="match status" value="1"/>
</dbReference>
<reference key="1">
    <citation type="journal article" date="1997" name="J. Cell Biol.">
        <title>Conservation of the centromere/kinetochore protein ZW10.</title>
        <authorList>
            <person name="Starr D.A."/>
            <person name="Williams B.C."/>
            <person name="Li Z."/>
            <person name="Etemad-Moghadam B."/>
            <person name="Dawe R.K."/>
            <person name="Goldberg M.L."/>
        </authorList>
    </citation>
    <scope>NUCLEOTIDE SEQUENCE [MRNA]</scope>
    <source>
        <tissue>Root</tissue>
    </source>
</reference>
<reference key="2">
    <citation type="journal article" date="1999" name="Nature">
        <title>Sequence and analysis of chromosome 2 of the plant Arabidopsis thaliana.</title>
        <authorList>
            <person name="Lin X."/>
            <person name="Kaul S."/>
            <person name="Rounsley S.D."/>
            <person name="Shea T.P."/>
            <person name="Benito M.-I."/>
            <person name="Town C.D."/>
            <person name="Fujii C.Y."/>
            <person name="Mason T.M."/>
            <person name="Bowman C.L."/>
            <person name="Barnstead M.E."/>
            <person name="Feldblyum T.V."/>
            <person name="Buell C.R."/>
            <person name="Ketchum K.A."/>
            <person name="Lee J.J."/>
            <person name="Ronning C.M."/>
            <person name="Koo H.L."/>
            <person name="Moffat K.S."/>
            <person name="Cronin L.A."/>
            <person name="Shen M."/>
            <person name="Pai G."/>
            <person name="Van Aken S."/>
            <person name="Umayam L."/>
            <person name="Tallon L.J."/>
            <person name="Gill J.E."/>
            <person name="Adams M.D."/>
            <person name="Carrera A.J."/>
            <person name="Creasy T.H."/>
            <person name="Goodman H.M."/>
            <person name="Somerville C.R."/>
            <person name="Copenhaver G.P."/>
            <person name="Preuss D."/>
            <person name="Nierman W.C."/>
            <person name="White O."/>
            <person name="Eisen J.A."/>
            <person name="Salzberg S.L."/>
            <person name="Fraser C.M."/>
            <person name="Venter J.C."/>
        </authorList>
    </citation>
    <scope>NUCLEOTIDE SEQUENCE [LARGE SCALE GENOMIC DNA]</scope>
    <source>
        <strain>cv. Columbia</strain>
    </source>
</reference>
<reference key="3">
    <citation type="journal article" date="2017" name="Plant J.">
        <title>Araport11: a complete reannotation of the Arabidopsis thaliana reference genome.</title>
        <authorList>
            <person name="Cheng C.Y."/>
            <person name="Krishnakumar V."/>
            <person name="Chan A.P."/>
            <person name="Thibaud-Nissen F."/>
            <person name="Schobel S."/>
            <person name="Town C.D."/>
        </authorList>
    </citation>
    <scope>GENOME REANNOTATION</scope>
    <source>
        <strain>cv. Columbia</strain>
    </source>
</reference>
<reference key="4">
    <citation type="journal article" date="2002" name="Science">
        <title>Functional annotation of a full-length Arabidopsis cDNA collection.</title>
        <authorList>
            <person name="Seki M."/>
            <person name="Narusaka M."/>
            <person name="Kamiya A."/>
            <person name="Ishida J."/>
            <person name="Satou M."/>
            <person name="Sakurai T."/>
            <person name="Nakajima M."/>
            <person name="Enju A."/>
            <person name="Akiyama K."/>
            <person name="Oono Y."/>
            <person name="Muramatsu M."/>
            <person name="Hayashizaki Y."/>
            <person name="Kawai J."/>
            <person name="Carninci P."/>
            <person name="Itoh M."/>
            <person name="Ishii Y."/>
            <person name="Arakawa T."/>
            <person name="Shibata K."/>
            <person name="Shinagawa A."/>
            <person name="Shinozaki K."/>
        </authorList>
    </citation>
    <scope>NUCLEOTIDE SEQUENCE [LARGE SCALE MRNA]</scope>
    <source>
        <strain>cv. Columbia</strain>
    </source>
</reference>
<reference key="5">
    <citation type="journal article" date="2003" name="Science">
        <title>Empirical analysis of transcriptional activity in the Arabidopsis genome.</title>
        <authorList>
            <person name="Yamada K."/>
            <person name="Lim J."/>
            <person name="Dale J.M."/>
            <person name="Chen H."/>
            <person name="Shinn P."/>
            <person name="Palm C.J."/>
            <person name="Southwick A.M."/>
            <person name="Wu H.C."/>
            <person name="Kim C.J."/>
            <person name="Nguyen M."/>
            <person name="Pham P.K."/>
            <person name="Cheuk R.F."/>
            <person name="Karlin-Newmann G."/>
            <person name="Liu S.X."/>
            <person name="Lam B."/>
            <person name="Sakano H."/>
            <person name="Wu T."/>
            <person name="Yu G."/>
            <person name="Miranda M."/>
            <person name="Quach H.L."/>
            <person name="Tripp M."/>
            <person name="Chang C.H."/>
            <person name="Lee J.M."/>
            <person name="Toriumi M.J."/>
            <person name="Chan M.M."/>
            <person name="Tang C.C."/>
            <person name="Onodera C.S."/>
            <person name="Deng J.M."/>
            <person name="Akiyama K."/>
            <person name="Ansari Y."/>
            <person name="Arakawa T."/>
            <person name="Banh J."/>
            <person name="Banno F."/>
            <person name="Bowser L."/>
            <person name="Brooks S.Y."/>
            <person name="Carninci P."/>
            <person name="Chao Q."/>
            <person name="Choy N."/>
            <person name="Enju A."/>
            <person name="Goldsmith A.D."/>
            <person name="Gurjal M."/>
            <person name="Hansen N.F."/>
            <person name="Hayashizaki Y."/>
            <person name="Johnson-Hopson C."/>
            <person name="Hsuan V.W."/>
            <person name="Iida K."/>
            <person name="Karnes M."/>
            <person name="Khan S."/>
            <person name="Koesema E."/>
            <person name="Ishida J."/>
            <person name="Jiang P.X."/>
            <person name="Jones T."/>
            <person name="Kawai J."/>
            <person name="Kamiya A."/>
            <person name="Meyers C."/>
            <person name="Nakajima M."/>
            <person name="Narusaka M."/>
            <person name="Seki M."/>
            <person name="Sakurai T."/>
            <person name="Satou M."/>
            <person name="Tamse R."/>
            <person name="Vaysberg M."/>
            <person name="Wallender E.K."/>
            <person name="Wong C."/>
            <person name="Yamamura Y."/>
            <person name="Yuan S."/>
            <person name="Shinozaki K."/>
            <person name="Davis R.W."/>
            <person name="Theologis A."/>
            <person name="Ecker J.R."/>
        </authorList>
    </citation>
    <scope>NUCLEOTIDE SEQUENCE [LARGE SCALE MRNA]</scope>
    <source>
        <strain>cv. Columbia</strain>
    </source>
</reference>
<reference key="6">
    <citation type="journal article" date="2013" name="Physiol. Plantarum">
        <title>MAIGO2 is involved in abscisic acid-mediated response to abiotic stresses and Golgi-to-ER retrograde transport.</title>
        <authorList>
            <person name="Zhao P."/>
            <person name="Liu F."/>
            <person name="Zhang B."/>
            <person name="Liu X."/>
            <person name="Wang B."/>
            <person name="Gong J."/>
            <person name="Yu G."/>
            <person name="Ma M."/>
            <person name="Lu Y."/>
            <person name="Sun J."/>
            <person name="Wang Z."/>
            <person name="Jia P."/>
            <person name="Liu H."/>
        </authorList>
    </citation>
    <scope>INTERACTION WITH MAG2</scope>
</reference>
<reference key="7">
    <citation type="journal article" date="2013" name="Plant J.">
        <title>MAG2 and three MAG2-INTERACTING PROTEINs form an ER-localized complex to facilitate storage protein transport in Arabidopsis thaliana.</title>
        <authorList>
            <person name="Li L."/>
            <person name="Shimada T."/>
            <person name="Takahashi H."/>
            <person name="Koumoto Y."/>
            <person name="Shirakawa M."/>
            <person name="Takagi J."/>
            <person name="Zhao X."/>
            <person name="Tu B."/>
            <person name="Jin H."/>
            <person name="Shen Z."/>
            <person name="Han B."/>
            <person name="Jia M."/>
            <person name="Kondo M."/>
            <person name="Nishimura M."/>
            <person name="Hara-Nishimura I."/>
        </authorList>
    </citation>
    <scope>IDENTIFICATION BY MASS SPECTROMETRY</scope>
    <scope>FUNCTION</scope>
    <scope>SUBCELLULAR LOCATION</scope>
    <scope>INTERACTION WITH MAG2</scope>
    <scope>DISRUPTION PHENOTYPE</scope>
</reference>
<sequence length="742" mass="83934">MPEIDALFESINVRDLLAGHDLNDPTTPLSAPDLRLLINRLESHSLRIKSKVQSYLVAHHSDFSELFSLCQDTVSRTRLISDDVSDVLQLVSDRPIDVEIRSVVDEITEKTKEVKLKRESLDLVNAIVGICEALQETKEALKNGRFRFAAERIRELKVVLRIGEEEDGEPVAYALLRKEWSNCFDEIQEVLAKFMENAVRFELDSSRIRIKYQLSVGETAGIALSTVLEAMEVIGILDYGLAKAADSIFKHVITPAVTHASTFAAVEDLCKSAGEVTEATLRLEQSSDHKFEDVDGDAMYSGILKVVKFICSSLCFGNVTWIHSFGRLTWPRISELIISKFLSKVVPEDASKLADFQKIIERTSQFEAALKELNFVSSSDAESRLSKYAEDVEVHFASRKKIEILAKARNLLLQCNFTIPQDIAMRNAKHIVCLLFSSERCVVSEAASQLMNLVHKTLEDVCVSSARVASEFYNAARDSILLYEAVVPVKLEKQLDGLNEAAVLLHNDCLYLFEEILGLAFEYRASFPSSIKEYAVFADIAPRFKLMAEEVLQKQVHLVISSLREAIDSADGFQNTHQIKQFKSAEFSIDQVVFSLKNVHMIWEPVLRPKTYKQSMCAVLESVFRRIARDILLLDDMAADETFELQKLIYLMLKNLSSVLDSVRSADETSRPLDDIIPSLRKTRKLAELLDMPLMSITSAWESGELFRCNFTRTEVQDFIKAIFTDSPLRKECLWRIDEVNQ</sequence>
<keyword id="KW-0131">Cell cycle</keyword>
<keyword id="KW-0132">Cell division</keyword>
<keyword id="KW-0137">Centromere</keyword>
<keyword id="KW-0158">Chromosome</keyword>
<keyword id="KW-0963">Cytoplasm</keyword>
<keyword id="KW-0206">Cytoskeleton</keyword>
<keyword id="KW-0256">Endoplasmic reticulum</keyword>
<keyword id="KW-0995">Kinetochore</keyword>
<keyword id="KW-0472">Membrane</keyword>
<keyword id="KW-0498">Mitosis</keyword>
<keyword id="KW-0653">Protein transport</keyword>
<keyword id="KW-1185">Reference proteome</keyword>
<keyword id="KW-0813">Transport</keyword>
<evidence type="ECO:0000269" key="1">
    <source>
    </source>
</evidence>
<evidence type="ECO:0000269" key="2">
    <source>
    </source>
</evidence>
<evidence type="ECO:0000303" key="3">
    <source>
    </source>
</evidence>
<evidence type="ECO:0000305" key="4"/>
<evidence type="ECO:0000312" key="5">
    <source>
        <dbReference type="Araport" id="AT2G32900"/>
    </source>
</evidence>
<evidence type="ECO:0000312" key="6">
    <source>
        <dbReference type="EMBL" id="AAB91977.2"/>
    </source>
</evidence>